<name>AMPA_MYCGE</name>
<reference key="1">
    <citation type="journal article" date="1995" name="Science">
        <title>The minimal gene complement of Mycoplasma genitalium.</title>
        <authorList>
            <person name="Fraser C.M."/>
            <person name="Gocayne J.D."/>
            <person name="White O."/>
            <person name="Adams M.D."/>
            <person name="Clayton R.A."/>
            <person name="Fleischmann R.D."/>
            <person name="Bult C.J."/>
            <person name="Kerlavage A.R."/>
            <person name="Sutton G.G."/>
            <person name="Kelley J.M."/>
            <person name="Fritchman J.L."/>
            <person name="Weidman J.F."/>
            <person name="Small K.V."/>
            <person name="Sandusky M."/>
            <person name="Fuhrmann J.L."/>
            <person name="Nguyen D.T."/>
            <person name="Utterback T.R."/>
            <person name="Saudek D.M."/>
            <person name="Phillips C.A."/>
            <person name="Merrick J.M."/>
            <person name="Tomb J.-F."/>
            <person name="Dougherty B.A."/>
            <person name="Bott K.F."/>
            <person name="Hu P.-C."/>
            <person name="Lucier T.S."/>
            <person name="Peterson S.N."/>
            <person name="Smith H.O."/>
            <person name="Hutchison C.A. III"/>
            <person name="Venter J.C."/>
        </authorList>
    </citation>
    <scope>NUCLEOTIDE SEQUENCE [LARGE SCALE GENOMIC DNA]</scope>
    <source>
        <strain>ATCC 33530 / DSM 19775 / NCTC 10195 / G37</strain>
    </source>
</reference>
<reference key="2">
    <citation type="journal article" date="1993" name="J. Bacteriol.">
        <title>A survey of the Mycoplasma genitalium genome by using random sequencing.</title>
        <authorList>
            <person name="Peterson S.N."/>
            <person name="Hu P.-C."/>
            <person name="Bott K.F."/>
            <person name="Hutchison C.A. III"/>
        </authorList>
    </citation>
    <scope>NUCLEOTIDE SEQUENCE [GENOMIC DNA] OF 1-72 AND 138-245</scope>
    <source>
        <strain>ATCC 33530 / DSM 19775 / NCTC 10195 / G37</strain>
    </source>
</reference>
<sequence>MRINKPFSDDSNTVVFVSSKTYGVKEEAAHNPNVEFGVVLPTDFPAFNRALVQFLKRKKTKLNINLDSLIELYKKNENSGCFHTAIKTVITSVTFCETTPFTMKTKPEKNVEVAVQCAVEYHNLVKEYETVGEYVNLARELQDTPSDLLYSEVFVKHFEKAASKLPVKIKVLKQSDLIKKKMGLLLGVNQGSEREARLLVISYQANKNSKEKLAFVGKGITYDSGGMNIKTGDYMRGMKYDMSGAAIVCSTVLALAKNKVKTNVVAVAALTENLPGAKAQRPDDIKIAYNGKSVEIDNTDAEGRLVLADAITYAAKDLAATHIIDVATLTGLMSYILSTTYTGIFSTCDHQWESFKKAACSAGEPVWRLPMHPDYLKPLQLTKLADLQNSTSARGAGSSRAACFLAEFREGVSLIHCDIASTASIENLGQGVLVRTLYERASQLANK</sequence>
<gene>
    <name type="primary">pepA</name>
    <name type="ordered locus">MG391</name>
</gene>
<proteinExistence type="inferred from homology"/>
<evidence type="ECO:0000250" key="1"/>
<evidence type="ECO:0000255" key="2"/>
<evidence type="ECO:0000305" key="3"/>
<comment type="function">
    <text evidence="1">Presumably involved in the processing and regular turnover of intracellular proteins. Catalyzes the removal of unsubstituted N-terminal amino acids from various peptides (By similarity).</text>
</comment>
<comment type="catalytic activity">
    <reaction>
        <text>Release of an N-terminal amino acid, Xaa-|-Yaa-, in which Xaa is preferably Leu, but may be other amino acids including Pro although not Arg or Lys, and Yaa may be Pro. Amino acid amides and methyl esters are also readily hydrolyzed, but rates on arylamides are exceedingly low.</text>
        <dbReference type="EC" id="3.4.11.1"/>
    </reaction>
</comment>
<comment type="catalytic activity">
    <reaction>
        <text>Release of an N-terminal amino acid, preferentially leucine, but not glutamic or aspartic acids.</text>
        <dbReference type="EC" id="3.4.11.10"/>
    </reaction>
</comment>
<comment type="cofactor">
    <cofactor evidence="1">
        <name>Mn(2+)</name>
        <dbReference type="ChEBI" id="CHEBI:29035"/>
    </cofactor>
    <text evidence="1">Binds 2 manganese ions per subunit.</text>
</comment>
<comment type="subcellular location">
    <subcellularLocation>
        <location evidence="1">Cytoplasm</location>
    </subcellularLocation>
</comment>
<comment type="similarity">
    <text evidence="3">Belongs to the peptidase M17 family.</text>
</comment>
<comment type="sequence caution" evidence="3">
    <conflict type="erroneous initiation">
        <sequence resource="EMBL-CDS" id="AAD12535"/>
    </conflict>
</comment>
<organism>
    <name type="scientific">Mycoplasma genitalium (strain ATCC 33530 / DSM 19775 / NCTC 10195 / G37)</name>
    <name type="common">Mycoplasmoides genitalium</name>
    <dbReference type="NCBI Taxonomy" id="243273"/>
    <lineage>
        <taxon>Bacteria</taxon>
        <taxon>Bacillati</taxon>
        <taxon>Mycoplasmatota</taxon>
        <taxon>Mycoplasmoidales</taxon>
        <taxon>Mycoplasmoidaceae</taxon>
        <taxon>Mycoplasmoides</taxon>
    </lineage>
</organism>
<accession>P47631</accession>
<accession>Q49371</accession>
<protein>
    <recommendedName>
        <fullName>Probable cytosol aminopeptidase</fullName>
        <ecNumber>3.4.11.1</ecNumber>
    </recommendedName>
    <alternativeName>
        <fullName>Leucine aminopeptidase</fullName>
        <shortName>LAP</shortName>
        <ecNumber>3.4.11.10</ecNumber>
    </alternativeName>
    <alternativeName>
        <fullName>Leucyl aminopeptidase</fullName>
    </alternativeName>
</protein>
<dbReference type="EC" id="3.4.11.1"/>
<dbReference type="EC" id="3.4.11.10"/>
<dbReference type="EMBL" id="L43967">
    <property type="protein sequence ID" value="AAC71619.1"/>
    <property type="molecule type" value="Genomic_DNA"/>
</dbReference>
<dbReference type="EMBL" id="U02268">
    <property type="protein sequence ID" value="AAD12535.1"/>
    <property type="status" value="ALT_INIT"/>
    <property type="molecule type" value="Genomic_DNA"/>
</dbReference>
<dbReference type="EMBL" id="U01801">
    <property type="protein sequence ID" value="AAD12327.1"/>
    <property type="molecule type" value="Genomic_DNA"/>
</dbReference>
<dbReference type="EMBL" id="U01802">
    <property type="protein sequence ID" value="AAD12328.1"/>
    <property type="molecule type" value="Genomic_DNA"/>
</dbReference>
<dbReference type="PIR" id="C64243">
    <property type="entry name" value="C64243"/>
</dbReference>
<dbReference type="RefSeq" id="WP_009885632.1">
    <property type="nucleotide sequence ID" value="NC_000908.2"/>
</dbReference>
<dbReference type="SMR" id="P47631"/>
<dbReference type="FunCoup" id="P47631">
    <property type="interactions" value="133"/>
</dbReference>
<dbReference type="STRING" id="243273.MG_391"/>
<dbReference type="GeneID" id="88282576"/>
<dbReference type="KEGG" id="mge:MG_391"/>
<dbReference type="eggNOG" id="COG0260">
    <property type="taxonomic scope" value="Bacteria"/>
</dbReference>
<dbReference type="HOGENOM" id="CLU_013734_6_3_14"/>
<dbReference type="InParanoid" id="P47631"/>
<dbReference type="OrthoDB" id="9809354at2"/>
<dbReference type="BioCyc" id="MGEN243273:G1GJ2-487-MONOMER"/>
<dbReference type="Proteomes" id="UP000000807">
    <property type="component" value="Chromosome"/>
</dbReference>
<dbReference type="GO" id="GO:0005737">
    <property type="term" value="C:cytoplasm"/>
    <property type="evidence" value="ECO:0000318"/>
    <property type="project" value="GO_Central"/>
</dbReference>
<dbReference type="GO" id="GO:0030145">
    <property type="term" value="F:manganese ion binding"/>
    <property type="evidence" value="ECO:0007669"/>
    <property type="project" value="UniProtKB-UniRule"/>
</dbReference>
<dbReference type="GO" id="GO:0070006">
    <property type="term" value="F:metalloaminopeptidase activity"/>
    <property type="evidence" value="ECO:0007669"/>
    <property type="project" value="InterPro"/>
</dbReference>
<dbReference type="GO" id="GO:0008233">
    <property type="term" value="F:peptidase activity"/>
    <property type="evidence" value="ECO:0000318"/>
    <property type="project" value="GO_Central"/>
</dbReference>
<dbReference type="GO" id="GO:0006508">
    <property type="term" value="P:proteolysis"/>
    <property type="evidence" value="ECO:0000318"/>
    <property type="project" value="GO_Central"/>
</dbReference>
<dbReference type="CDD" id="cd00433">
    <property type="entry name" value="Peptidase_M17"/>
    <property type="match status" value="1"/>
</dbReference>
<dbReference type="Gene3D" id="3.40.630.10">
    <property type="entry name" value="Zn peptidases"/>
    <property type="match status" value="1"/>
</dbReference>
<dbReference type="HAMAP" id="MF_00181">
    <property type="entry name" value="Cytosol_peptidase_M17"/>
    <property type="match status" value="1"/>
</dbReference>
<dbReference type="InterPro" id="IPR011356">
    <property type="entry name" value="Leucine_aapep/pepB"/>
</dbReference>
<dbReference type="InterPro" id="IPR000819">
    <property type="entry name" value="Peptidase_M17_C"/>
</dbReference>
<dbReference type="InterPro" id="IPR023042">
    <property type="entry name" value="Peptidase_M17_leu_NH2_pept"/>
</dbReference>
<dbReference type="NCBIfam" id="NF002080">
    <property type="entry name" value="PRK00913.3-2"/>
    <property type="match status" value="1"/>
</dbReference>
<dbReference type="PANTHER" id="PTHR11963:SF23">
    <property type="entry name" value="CYTOSOL AMINOPEPTIDASE"/>
    <property type="match status" value="1"/>
</dbReference>
<dbReference type="PANTHER" id="PTHR11963">
    <property type="entry name" value="LEUCINE AMINOPEPTIDASE-RELATED"/>
    <property type="match status" value="1"/>
</dbReference>
<dbReference type="Pfam" id="PF00883">
    <property type="entry name" value="Peptidase_M17"/>
    <property type="match status" value="1"/>
</dbReference>
<dbReference type="PRINTS" id="PR00481">
    <property type="entry name" value="LAMNOPPTDASE"/>
</dbReference>
<dbReference type="SUPFAM" id="SSF53187">
    <property type="entry name" value="Zn-dependent exopeptidases"/>
    <property type="match status" value="1"/>
</dbReference>
<dbReference type="PROSITE" id="PS00631">
    <property type="entry name" value="CYTOSOL_AP"/>
    <property type="match status" value="1"/>
</dbReference>
<keyword id="KW-0031">Aminopeptidase</keyword>
<keyword id="KW-0963">Cytoplasm</keyword>
<keyword id="KW-0378">Hydrolase</keyword>
<keyword id="KW-0464">Manganese</keyword>
<keyword id="KW-0479">Metal-binding</keyword>
<keyword id="KW-0645">Protease</keyword>
<keyword id="KW-1185">Reference proteome</keyword>
<feature type="chain" id="PRO_0000165766" description="Probable cytosol aminopeptidase">
    <location>
        <begin position="1"/>
        <end position="447"/>
    </location>
</feature>
<feature type="active site" evidence="2">
    <location>
        <position position="230"/>
    </location>
</feature>
<feature type="active site" evidence="2">
    <location>
        <position position="304"/>
    </location>
</feature>
<feature type="binding site" evidence="1">
    <location>
        <position position="218"/>
    </location>
    <ligand>
        <name>Mn(2+)</name>
        <dbReference type="ChEBI" id="CHEBI:29035"/>
        <label>2</label>
    </ligand>
</feature>
<feature type="binding site" evidence="1">
    <location>
        <position position="223"/>
    </location>
    <ligand>
        <name>Mn(2+)</name>
        <dbReference type="ChEBI" id="CHEBI:29035"/>
        <label>1</label>
    </ligand>
</feature>
<feature type="binding site" evidence="1">
    <location>
        <position position="223"/>
    </location>
    <ligand>
        <name>Mn(2+)</name>
        <dbReference type="ChEBI" id="CHEBI:29035"/>
        <label>2</label>
    </ligand>
</feature>
<feature type="binding site" evidence="1">
    <location>
        <position position="241"/>
    </location>
    <ligand>
        <name>Mn(2+)</name>
        <dbReference type="ChEBI" id="CHEBI:29035"/>
        <label>2</label>
    </ligand>
</feature>
<feature type="binding site" evidence="1">
    <location>
        <position position="300"/>
    </location>
    <ligand>
        <name>Mn(2+)</name>
        <dbReference type="ChEBI" id="CHEBI:29035"/>
        <label>1</label>
    </ligand>
</feature>
<feature type="binding site" evidence="1">
    <location>
        <position position="302"/>
    </location>
    <ligand>
        <name>Mn(2+)</name>
        <dbReference type="ChEBI" id="CHEBI:29035"/>
        <label>1</label>
    </ligand>
</feature>
<feature type="binding site" evidence="1">
    <location>
        <position position="302"/>
    </location>
    <ligand>
        <name>Mn(2+)</name>
        <dbReference type="ChEBI" id="CHEBI:29035"/>
        <label>2</label>
    </ligand>
</feature>